<sequence length="202" mass="23152">MSCVPWKGDKAKAESSDLPQAAPPQIYHEKQRRELCALHALNNVFQDSNAFTRETLQEIFQRLSPNTMVTPHKKSMLGNGNYDVNVIMAALQTKGYEAVWWDKRRDVGVIALTNVMGFIMNLPSSLCWGPLKLPLKRQHWICVREVGGAYYNLDSKLKMPEWIGGESELRKFLKYHLRGKNCELLLVVPEEVEAHQSWRADV</sequence>
<evidence type="ECO:0000250" key="1"/>
<evidence type="ECO:0000250" key="2">
    <source>
        <dbReference type="UniProtKB" id="Q15040"/>
    </source>
</evidence>
<evidence type="ECO:0000255" key="3">
    <source>
        <dbReference type="PROSITE-ProRule" id="PRU00331"/>
    </source>
</evidence>
<evidence type="ECO:0000256" key="4">
    <source>
        <dbReference type="SAM" id="MobiDB-lite"/>
    </source>
</evidence>
<evidence type="ECO:0000269" key="5">
    <source>
    </source>
</evidence>
<gene>
    <name type="primary">Josd1</name>
</gene>
<name>JOS1_MOUSE</name>
<accession>Q9DBJ6</accession>
<accession>Q3U3E9</accession>
<feature type="chain" id="PRO_0000053840" description="Josephin-1">
    <location>
        <begin position="1"/>
        <end position="202"/>
    </location>
</feature>
<feature type="domain" description="Josephin" evidence="3">
    <location>
        <begin position="23"/>
        <end position="202"/>
    </location>
</feature>
<feature type="region of interest" description="Disordered" evidence="4">
    <location>
        <begin position="1"/>
        <end position="22"/>
    </location>
</feature>
<feature type="active site" description="Nucleophile" evidence="3">
    <location>
        <position position="36"/>
    </location>
</feature>
<feature type="active site" description="Proton acceptor" evidence="3">
    <location>
        <position position="139"/>
    </location>
</feature>
<feature type="modified residue" description="Phosphoserine" evidence="2">
    <location>
        <position position="15"/>
    </location>
</feature>
<dbReference type="EC" id="3.4.19.12"/>
<dbReference type="EMBL" id="AK004913">
    <property type="protein sequence ID" value="BAB23664.1"/>
    <property type="molecule type" value="mRNA"/>
</dbReference>
<dbReference type="EMBL" id="AK154799">
    <property type="protein sequence ID" value="BAE32837.1"/>
    <property type="molecule type" value="mRNA"/>
</dbReference>
<dbReference type="EMBL" id="BC006928">
    <property type="protein sequence ID" value="AAH06928.1"/>
    <property type="molecule type" value="mRNA"/>
</dbReference>
<dbReference type="EMBL" id="BC086769">
    <property type="protein sequence ID" value="AAH86769.1"/>
    <property type="molecule type" value="mRNA"/>
</dbReference>
<dbReference type="CCDS" id="CCDS27647.1"/>
<dbReference type="RefSeq" id="NP_083068.1">
    <property type="nucleotide sequence ID" value="NM_028792.3"/>
</dbReference>
<dbReference type="RefSeq" id="XP_001481034.3">
    <property type="nucleotide sequence ID" value="XM_001480984.6"/>
</dbReference>
<dbReference type="SMR" id="Q9DBJ6"/>
<dbReference type="FunCoup" id="Q9DBJ6">
    <property type="interactions" value="168"/>
</dbReference>
<dbReference type="STRING" id="10090.ENSMUSP00000023061"/>
<dbReference type="MEROPS" id="C86.004"/>
<dbReference type="iPTMnet" id="Q9DBJ6"/>
<dbReference type="PhosphoSitePlus" id="Q9DBJ6"/>
<dbReference type="jPOST" id="Q9DBJ6"/>
<dbReference type="PaxDb" id="10090-ENSMUSP00000023061"/>
<dbReference type="ProteomicsDB" id="269372"/>
<dbReference type="Pumba" id="Q9DBJ6"/>
<dbReference type="Antibodypedia" id="202">
    <property type="antibodies" value="91 antibodies from 16 providers"/>
</dbReference>
<dbReference type="Ensembl" id="ENSMUST00000023061.7">
    <property type="protein sequence ID" value="ENSMUSP00000023061.6"/>
    <property type="gene ID" value="ENSMUSG00000022426.7"/>
</dbReference>
<dbReference type="GeneID" id="74158"/>
<dbReference type="KEGG" id="mmu:74158"/>
<dbReference type="UCSC" id="uc007wue.2">
    <property type="organism name" value="mouse"/>
</dbReference>
<dbReference type="AGR" id="MGI:1921408"/>
<dbReference type="CTD" id="9929"/>
<dbReference type="MGI" id="MGI:1921408">
    <property type="gene designation" value="Josd1"/>
</dbReference>
<dbReference type="VEuPathDB" id="HostDB:ENSMUSG00000022426"/>
<dbReference type="eggNOG" id="KOG2934">
    <property type="taxonomic scope" value="Eukaryota"/>
</dbReference>
<dbReference type="GeneTree" id="ENSGT00390000009228"/>
<dbReference type="HOGENOM" id="CLU_103892_0_0_1"/>
<dbReference type="InParanoid" id="Q9DBJ6"/>
<dbReference type="OMA" id="PPHIYHE"/>
<dbReference type="OrthoDB" id="422700at2759"/>
<dbReference type="PhylomeDB" id="Q9DBJ6"/>
<dbReference type="TreeFam" id="TF313660"/>
<dbReference type="Reactome" id="R-MMU-5689877">
    <property type="pathway name" value="Josephin domain DUBs"/>
</dbReference>
<dbReference type="BioGRID-ORCS" id="100043771">
    <property type="hits" value="0 hits in 1 CRISPR screen"/>
</dbReference>
<dbReference type="BioGRID-ORCS" id="74158">
    <property type="hits" value="1 hit in 75 CRISPR screens"/>
</dbReference>
<dbReference type="ChiTaRS" id="Josd1">
    <property type="organism name" value="mouse"/>
</dbReference>
<dbReference type="PRO" id="PR:Q9DBJ6"/>
<dbReference type="Proteomes" id="UP000000589">
    <property type="component" value="Chromosome 15"/>
</dbReference>
<dbReference type="RNAct" id="Q9DBJ6">
    <property type="molecule type" value="protein"/>
</dbReference>
<dbReference type="Bgee" id="ENSMUSG00000022426">
    <property type="expression patterns" value="Expressed in lacrimal gland and 261 other cell types or tissues"/>
</dbReference>
<dbReference type="GO" id="GO:0005737">
    <property type="term" value="C:cytoplasm"/>
    <property type="evidence" value="ECO:0007669"/>
    <property type="project" value="UniProtKB-SubCell"/>
</dbReference>
<dbReference type="GO" id="GO:0005886">
    <property type="term" value="C:plasma membrane"/>
    <property type="evidence" value="ECO:0000314"/>
    <property type="project" value="MGI"/>
</dbReference>
<dbReference type="GO" id="GO:0004843">
    <property type="term" value="F:cysteine-type deubiquitinase activity"/>
    <property type="evidence" value="ECO:0007669"/>
    <property type="project" value="UniProtKB-EC"/>
</dbReference>
<dbReference type="GO" id="GO:0101005">
    <property type="term" value="F:deubiquitinase activity"/>
    <property type="evidence" value="ECO:0000314"/>
    <property type="project" value="MGI"/>
</dbReference>
<dbReference type="GO" id="GO:0048870">
    <property type="term" value="P:cell motility"/>
    <property type="evidence" value="ECO:0000314"/>
    <property type="project" value="MGI"/>
</dbReference>
<dbReference type="GO" id="GO:0006897">
    <property type="term" value="P:endocytosis"/>
    <property type="evidence" value="ECO:0000314"/>
    <property type="project" value="MGI"/>
</dbReference>
<dbReference type="GO" id="GO:0044091">
    <property type="term" value="P:membrane biogenesis"/>
    <property type="evidence" value="ECO:0000314"/>
    <property type="project" value="MGI"/>
</dbReference>
<dbReference type="GO" id="GO:0061024">
    <property type="term" value="P:membrane organization"/>
    <property type="evidence" value="ECO:0000314"/>
    <property type="project" value="MGI"/>
</dbReference>
<dbReference type="GO" id="GO:0016579">
    <property type="term" value="P:protein deubiquitination"/>
    <property type="evidence" value="ECO:0000314"/>
    <property type="project" value="MGI"/>
</dbReference>
<dbReference type="GO" id="GO:0006508">
    <property type="term" value="P:proteolysis"/>
    <property type="evidence" value="ECO:0007669"/>
    <property type="project" value="UniProtKB-KW"/>
</dbReference>
<dbReference type="FunFam" id="3.90.70.40:FF:000002">
    <property type="entry name" value="josephin-1 isoform X2"/>
    <property type="match status" value="1"/>
</dbReference>
<dbReference type="Gene3D" id="3.90.70.40">
    <property type="match status" value="1"/>
</dbReference>
<dbReference type="InterPro" id="IPR040053">
    <property type="entry name" value="JOSD1/2"/>
</dbReference>
<dbReference type="InterPro" id="IPR006155">
    <property type="entry name" value="Josephin"/>
</dbReference>
<dbReference type="PANTHER" id="PTHR13291">
    <property type="entry name" value="JOSEPHIN 1, 2"/>
    <property type="match status" value="1"/>
</dbReference>
<dbReference type="PANTHER" id="PTHR13291:SF1">
    <property type="entry name" value="JOSEPHIN-1"/>
    <property type="match status" value="1"/>
</dbReference>
<dbReference type="Pfam" id="PF02099">
    <property type="entry name" value="Josephin"/>
    <property type="match status" value="1"/>
</dbReference>
<dbReference type="SMART" id="SM01246">
    <property type="entry name" value="Josephin"/>
    <property type="match status" value="1"/>
</dbReference>
<dbReference type="PROSITE" id="PS50957">
    <property type="entry name" value="JOSEPHIN"/>
    <property type="match status" value="1"/>
</dbReference>
<comment type="function">
    <text evidence="1">Deubiquitinates monoubiquitinated probes (in vitro). When ubiquitinated, cleaves 'Lys-63'-linked and 'Lys-48'-linked poly-ubiquitin chains (in vitro), hence may act as a deubiquitinating enzyme. May increase macropinocytosis and suppress clathrin- and caveolae-mediated endocytosis. May enhance membrane dynamics and cell motility independently of its catalytic activity (By similarity).</text>
</comment>
<comment type="catalytic activity">
    <reaction>
        <text>Thiol-dependent hydrolysis of ester, thioester, amide, peptide and isopeptide bonds formed by the C-terminal Gly of ubiquitin (a 76-residue protein attached to proteins as an intracellular targeting signal).</text>
        <dbReference type="EC" id="3.4.19.12"/>
    </reaction>
</comment>
<comment type="subunit">
    <text evidence="1">Interacts with beta-actin/ACTB.</text>
</comment>
<comment type="subcellular location">
    <subcellularLocation>
        <location evidence="1">Cell membrane</location>
    </subcellularLocation>
    <subcellularLocation>
        <location evidence="1">Cytoplasm</location>
    </subcellularLocation>
    <text evidence="1">Ubiquitination increases localization the plasma membrane. In the cytosol, the unubiquitinated form may be associated with the cytoskeleton via ACTB-binding.</text>
</comment>
<comment type="tissue specificity">
    <text evidence="5">Widely expressed (at protein level).</text>
</comment>
<comment type="PTM">
    <text evidence="5">Monoubiquitinated. Ubiquitination activates deubiquitination activity in vitro.</text>
</comment>
<organism>
    <name type="scientific">Mus musculus</name>
    <name type="common">Mouse</name>
    <dbReference type="NCBI Taxonomy" id="10090"/>
    <lineage>
        <taxon>Eukaryota</taxon>
        <taxon>Metazoa</taxon>
        <taxon>Chordata</taxon>
        <taxon>Craniata</taxon>
        <taxon>Vertebrata</taxon>
        <taxon>Euteleostomi</taxon>
        <taxon>Mammalia</taxon>
        <taxon>Eutheria</taxon>
        <taxon>Euarchontoglires</taxon>
        <taxon>Glires</taxon>
        <taxon>Rodentia</taxon>
        <taxon>Myomorpha</taxon>
        <taxon>Muroidea</taxon>
        <taxon>Muridae</taxon>
        <taxon>Murinae</taxon>
        <taxon>Mus</taxon>
        <taxon>Mus</taxon>
    </lineage>
</organism>
<proteinExistence type="evidence at protein level"/>
<reference key="1">
    <citation type="journal article" date="2005" name="Science">
        <title>The transcriptional landscape of the mammalian genome.</title>
        <authorList>
            <person name="Carninci P."/>
            <person name="Kasukawa T."/>
            <person name="Katayama S."/>
            <person name="Gough J."/>
            <person name="Frith M.C."/>
            <person name="Maeda N."/>
            <person name="Oyama R."/>
            <person name="Ravasi T."/>
            <person name="Lenhard B."/>
            <person name="Wells C."/>
            <person name="Kodzius R."/>
            <person name="Shimokawa K."/>
            <person name="Bajic V.B."/>
            <person name="Brenner S.E."/>
            <person name="Batalov S."/>
            <person name="Forrest A.R."/>
            <person name="Zavolan M."/>
            <person name="Davis M.J."/>
            <person name="Wilming L.G."/>
            <person name="Aidinis V."/>
            <person name="Allen J.E."/>
            <person name="Ambesi-Impiombato A."/>
            <person name="Apweiler R."/>
            <person name="Aturaliya R.N."/>
            <person name="Bailey T.L."/>
            <person name="Bansal M."/>
            <person name="Baxter L."/>
            <person name="Beisel K.W."/>
            <person name="Bersano T."/>
            <person name="Bono H."/>
            <person name="Chalk A.M."/>
            <person name="Chiu K.P."/>
            <person name="Choudhary V."/>
            <person name="Christoffels A."/>
            <person name="Clutterbuck D.R."/>
            <person name="Crowe M.L."/>
            <person name="Dalla E."/>
            <person name="Dalrymple B.P."/>
            <person name="de Bono B."/>
            <person name="Della Gatta G."/>
            <person name="di Bernardo D."/>
            <person name="Down T."/>
            <person name="Engstrom P."/>
            <person name="Fagiolini M."/>
            <person name="Faulkner G."/>
            <person name="Fletcher C.F."/>
            <person name="Fukushima T."/>
            <person name="Furuno M."/>
            <person name="Futaki S."/>
            <person name="Gariboldi M."/>
            <person name="Georgii-Hemming P."/>
            <person name="Gingeras T.R."/>
            <person name="Gojobori T."/>
            <person name="Green R.E."/>
            <person name="Gustincich S."/>
            <person name="Harbers M."/>
            <person name="Hayashi Y."/>
            <person name="Hensch T.K."/>
            <person name="Hirokawa N."/>
            <person name="Hill D."/>
            <person name="Huminiecki L."/>
            <person name="Iacono M."/>
            <person name="Ikeo K."/>
            <person name="Iwama A."/>
            <person name="Ishikawa T."/>
            <person name="Jakt M."/>
            <person name="Kanapin A."/>
            <person name="Katoh M."/>
            <person name="Kawasawa Y."/>
            <person name="Kelso J."/>
            <person name="Kitamura H."/>
            <person name="Kitano H."/>
            <person name="Kollias G."/>
            <person name="Krishnan S.P."/>
            <person name="Kruger A."/>
            <person name="Kummerfeld S.K."/>
            <person name="Kurochkin I.V."/>
            <person name="Lareau L.F."/>
            <person name="Lazarevic D."/>
            <person name="Lipovich L."/>
            <person name="Liu J."/>
            <person name="Liuni S."/>
            <person name="McWilliam S."/>
            <person name="Madan Babu M."/>
            <person name="Madera M."/>
            <person name="Marchionni L."/>
            <person name="Matsuda H."/>
            <person name="Matsuzawa S."/>
            <person name="Miki H."/>
            <person name="Mignone F."/>
            <person name="Miyake S."/>
            <person name="Morris K."/>
            <person name="Mottagui-Tabar S."/>
            <person name="Mulder N."/>
            <person name="Nakano N."/>
            <person name="Nakauchi H."/>
            <person name="Ng P."/>
            <person name="Nilsson R."/>
            <person name="Nishiguchi S."/>
            <person name="Nishikawa S."/>
            <person name="Nori F."/>
            <person name="Ohara O."/>
            <person name="Okazaki Y."/>
            <person name="Orlando V."/>
            <person name="Pang K.C."/>
            <person name="Pavan W.J."/>
            <person name="Pavesi G."/>
            <person name="Pesole G."/>
            <person name="Petrovsky N."/>
            <person name="Piazza S."/>
            <person name="Reed J."/>
            <person name="Reid J.F."/>
            <person name="Ring B.Z."/>
            <person name="Ringwald M."/>
            <person name="Rost B."/>
            <person name="Ruan Y."/>
            <person name="Salzberg S.L."/>
            <person name="Sandelin A."/>
            <person name="Schneider C."/>
            <person name="Schoenbach C."/>
            <person name="Sekiguchi K."/>
            <person name="Semple C.A."/>
            <person name="Seno S."/>
            <person name="Sessa L."/>
            <person name="Sheng Y."/>
            <person name="Shibata Y."/>
            <person name="Shimada H."/>
            <person name="Shimada K."/>
            <person name="Silva D."/>
            <person name="Sinclair B."/>
            <person name="Sperling S."/>
            <person name="Stupka E."/>
            <person name="Sugiura K."/>
            <person name="Sultana R."/>
            <person name="Takenaka Y."/>
            <person name="Taki K."/>
            <person name="Tammoja K."/>
            <person name="Tan S.L."/>
            <person name="Tang S."/>
            <person name="Taylor M.S."/>
            <person name="Tegner J."/>
            <person name="Teichmann S.A."/>
            <person name="Ueda H.R."/>
            <person name="van Nimwegen E."/>
            <person name="Verardo R."/>
            <person name="Wei C.L."/>
            <person name="Yagi K."/>
            <person name="Yamanishi H."/>
            <person name="Zabarovsky E."/>
            <person name="Zhu S."/>
            <person name="Zimmer A."/>
            <person name="Hide W."/>
            <person name="Bult C."/>
            <person name="Grimmond S.M."/>
            <person name="Teasdale R.D."/>
            <person name="Liu E.T."/>
            <person name="Brusic V."/>
            <person name="Quackenbush J."/>
            <person name="Wahlestedt C."/>
            <person name="Mattick J.S."/>
            <person name="Hume D.A."/>
            <person name="Kai C."/>
            <person name="Sasaki D."/>
            <person name="Tomaru Y."/>
            <person name="Fukuda S."/>
            <person name="Kanamori-Katayama M."/>
            <person name="Suzuki M."/>
            <person name="Aoki J."/>
            <person name="Arakawa T."/>
            <person name="Iida J."/>
            <person name="Imamura K."/>
            <person name="Itoh M."/>
            <person name="Kato T."/>
            <person name="Kawaji H."/>
            <person name="Kawagashira N."/>
            <person name="Kawashima T."/>
            <person name="Kojima M."/>
            <person name="Kondo S."/>
            <person name="Konno H."/>
            <person name="Nakano K."/>
            <person name="Ninomiya N."/>
            <person name="Nishio T."/>
            <person name="Okada M."/>
            <person name="Plessy C."/>
            <person name="Shibata K."/>
            <person name="Shiraki T."/>
            <person name="Suzuki S."/>
            <person name="Tagami M."/>
            <person name="Waki K."/>
            <person name="Watahiki A."/>
            <person name="Okamura-Oho Y."/>
            <person name="Suzuki H."/>
            <person name="Kawai J."/>
            <person name="Hayashizaki Y."/>
        </authorList>
    </citation>
    <scope>NUCLEOTIDE SEQUENCE [LARGE SCALE MRNA]</scope>
    <source>
        <strain>C57BL/6J</strain>
        <strain>NOD</strain>
        <tissue>Liver</tissue>
    </source>
</reference>
<reference key="2">
    <citation type="journal article" date="2004" name="Genome Res.">
        <title>The status, quality, and expansion of the NIH full-length cDNA project: the Mammalian Gene Collection (MGC).</title>
        <authorList>
            <consortium name="The MGC Project Team"/>
        </authorList>
    </citation>
    <scope>NUCLEOTIDE SEQUENCE [LARGE SCALE MRNA]</scope>
    <source>
        <strain>C57BL/6J</strain>
        <tissue>Brain</tissue>
        <tissue>Mammary tumor</tissue>
    </source>
</reference>
<reference key="3">
    <citation type="journal article" date="2013" name="J. Biol. Chem.">
        <title>JosD1, a membrane-targeted deubiquitinating enzyme, is activated by ubiquitination and regulates membrane dynamics, cell motility, and endocytosis.</title>
        <authorList>
            <person name="Seki T."/>
            <person name="Gong L."/>
            <person name="Williams A.J."/>
            <person name="Sakai N."/>
            <person name="Todi S.V."/>
            <person name="Paulson H.L."/>
        </authorList>
    </citation>
    <scope>TISSUE SPECIFICITY</scope>
    <scope>UBIQUITINATION</scope>
</reference>
<reference key="4">
    <citation type="journal article" date="2003" name="Proteins">
        <title>Structural modeling of ataxin-3 reveals distant homology to adaptins.</title>
        <authorList>
            <person name="Albrecht M."/>
            <person name="Hoffmann D."/>
            <person name="Evert B.O."/>
            <person name="Schmitt I."/>
            <person name="Wuellner U."/>
            <person name="Lengauer T."/>
        </authorList>
    </citation>
    <scope>3D-STRUCTURE MODELING</scope>
</reference>
<keyword id="KW-1003">Cell membrane</keyword>
<keyword id="KW-0963">Cytoplasm</keyword>
<keyword id="KW-0378">Hydrolase</keyword>
<keyword id="KW-0472">Membrane</keyword>
<keyword id="KW-0597">Phosphoprotein</keyword>
<keyword id="KW-0645">Protease</keyword>
<keyword id="KW-1185">Reference proteome</keyword>
<keyword id="KW-0832">Ubl conjugation</keyword>
<keyword id="KW-0833">Ubl conjugation pathway</keyword>
<protein>
    <recommendedName>
        <fullName>Josephin-1</fullName>
        <ecNumber>3.4.19.12</ecNumber>
    </recommendedName>
    <alternativeName>
        <fullName>Josephin domain-containing protein 1</fullName>
    </alternativeName>
</protein>